<feature type="chain" id="PRO_1000215062" description="Large ribosomal subunit protein uL30">
    <location>
        <begin position="1"/>
        <end position="61"/>
    </location>
</feature>
<name>RL30_EXISA</name>
<organism>
    <name type="scientific">Exiguobacterium sp. (strain ATCC BAA-1283 / AT1b)</name>
    <dbReference type="NCBI Taxonomy" id="360911"/>
    <lineage>
        <taxon>Bacteria</taxon>
        <taxon>Bacillati</taxon>
        <taxon>Bacillota</taxon>
        <taxon>Bacilli</taxon>
        <taxon>Bacillales</taxon>
        <taxon>Bacillales Family XII. Incertae Sedis</taxon>
        <taxon>Exiguobacterium</taxon>
    </lineage>
</organism>
<sequence length="61" mass="6796">MAKLAITLTRSTIGRPEGQRVTVRTLGLRKMHQTVVVPDNVAMRGMINKVSHLVTVKEINE</sequence>
<gene>
    <name evidence="1" type="primary">rpmD</name>
    <name type="ordered locus">EAT1b_1615</name>
</gene>
<reference key="1">
    <citation type="journal article" date="2011" name="J. Bacteriol.">
        <title>Complete genome sequence of the Thermophilic Bacterium Exiguobacterium sp. AT1b.</title>
        <authorList>
            <person name="Vishnivetskaya T.A."/>
            <person name="Lucas S."/>
            <person name="Copeland A."/>
            <person name="Lapidus A."/>
            <person name="Glavina del Rio T."/>
            <person name="Dalin E."/>
            <person name="Tice H."/>
            <person name="Bruce D.C."/>
            <person name="Goodwin L.A."/>
            <person name="Pitluck S."/>
            <person name="Saunders E."/>
            <person name="Brettin T."/>
            <person name="Detter C."/>
            <person name="Han C."/>
            <person name="Larimer F."/>
            <person name="Land M.L."/>
            <person name="Hauser L.J."/>
            <person name="Kyrpides N.C."/>
            <person name="Ovchinnikova G."/>
            <person name="Kathariou S."/>
            <person name="Ramaley R.F."/>
            <person name="Rodrigues D.F."/>
            <person name="Hendrix C."/>
            <person name="Richardson P."/>
            <person name="Tiedje J.M."/>
        </authorList>
    </citation>
    <scope>NUCLEOTIDE SEQUENCE [LARGE SCALE GENOMIC DNA]</scope>
    <source>
        <strain>ATCC BAA-1283 / AT1b</strain>
    </source>
</reference>
<dbReference type="EMBL" id="CP001615">
    <property type="protein sequence ID" value="ACQ70541.1"/>
    <property type="molecule type" value="Genomic_DNA"/>
</dbReference>
<dbReference type="RefSeq" id="WP_012727659.1">
    <property type="nucleotide sequence ID" value="NZ_MOEL01000001.1"/>
</dbReference>
<dbReference type="SMR" id="C4KZM8"/>
<dbReference type="STRING" id="360911.EAT1b_1615"/>
<dbReference type="GeneID" id="94370761"/>
<dbReference type="KEGG" id="eat:EAT1b_1615"/>
<dbReference type="eggNOG" id="COG1841">
    <property type="taxonomic scope" value="Bacteria"/>
</dbReference>
<dbReference type="HOGENOM" id="CLU_131047_2_1_9"/>
<dbReference type="OrthoDB" id="9812790at2"/>
<dbReference type="Proteomes" id="UP000000716">
    <property type="component" value="Chromosome"/>
</dbReference>
<dbReference type="GO" id="GO:0022625">
    <property type="term" value="C:cytosolic large ribosomal subunit"/>
    <property type="evidence" value="ECO:0007669"/>
    <property type="project" value="TreeGrafter"/>
</dbReference>
<dbReference type="GO" id="GO:0003735">
    <property type="term" value="F:structural constituent of ribosome"/>
    <property type="evidence" value="ECO:0007669"/>
    <property type="project" value="InterPro"/>
</dbReference>
<dbReference type="GO" id="GO:0006412">
    <property type="term" value="P:translation"/>
    <property type="evidence" value="ECO:0007669"/>
    <property type="project" value="UniProtKB-UniRule"/>
</dbReference>
<dbReference type="CDD" id="cd01658">
    <property type="entry name" value="Ribosomal_L30"/>
    <property type="match status" value="1"/>
</dbReference>
<dbReference type="FunFam" id="3.30.1390.20:FF:000001">
    <property type="entry name" value="50S ribosomal protein L30"/>
    <property type="match status" value="1"/>
</dbReference>
<dbReference type="Gene3D" id="3.30.1390.20">
    <property type="entry name" value="Ribosomal protein L30, ferredoxin-like fold domain"/>
    <property type="match status" value="1"/>
</dbReference>
<dbReference type="HAMAP" id="MF_01371_B">
    <property type="entry name" value="Ribosomal_uL30_B"/>
    <property type="match status" value="1"/>
</dbReference>
<dbReference type="InterPro" id="IPR036919">
    <property type="entry name" value="Ribo_uL30_ferredoxin-like_sf"/>
</dbReference>
<dbReference type="InterPro" id="IPR005996">
    <property type="entry name" value="Ribosomal_uL30_bac-type"/>
</dbReference>
<dbReference type="InterPro" id="IPR018038">
    <property type="entry name" value="Ribosomal_uL30_CS"/>
</dbReference>
<dbReference type="InterPro" id="IPR016082">
    <property type="entry name" value="Ribosomal_uL30_ferredoxin-like"/>
</dbReference>
<dbReference type="NCBIfam" id="TIGR01308">
    <property type="entry name" value="rpmD_bact"/>
    <property type="match status" value="1"/>
</dbReference>
<dbReference type="PANTHER" id="PTHR15892:SF2">
    <property type="entry name" value="LARGE RIBOSOMAL SUBUNIT PROTEIN UL30M"/>
    <property type="match status" value="1"/>
</dbReference>
<dbReference type="PANTHER" id="PTHR15892">
    <property type="entry name" value="MITOCHONDRIAL RIBOSOMAL PROTEIN L30"/>
    <property type="match status" value="1"/>
</dbReference>
<dbReference type="Pfam" id="PF00327">
    <property type="entry name" value="Ribosomal_L30"/>
    <property type="match status" value="1"/>
</dbReference>
<dbReference type="PIRSF" id="PIRSF002211">
    <property type="entry name" value="Ribosomal_L30_bac-type"/>
    <property type="match status" value="1"/>
</dbReference>
<dbReference type="SUPFAM" id="SSF55129">
    <property type="entry name" value="Ribosomal protein L30p/L7e"/>
    <property type="match status" value="1"/>
</dbReference>
<dbReference type="PROSITE" id="PS00634">
    <property type="entry name" value="RIBOSOMAL_L30"/>
    <property type="match status" value="1"/>
</dbReference>
<comment type="subunit">
    <text evidence="1">Part of the 50S ribosomal subunit.</text>
</comment>
<comment type="similarity">
    <text evidence="1">Belongs to the universal ribosomal protein uL30 family.</text>
</comment>
<accession>C4KZM8</accession>
<evidence type="ECO:0000255" key="1">
    <source>
        <dbReference type="HAMAP-Rule" id="MF_01371"/>
    </source>
</evidence>
<evidence type="ECO:0000305" key="2"/>
<proteinExistence type="inferred from homology"/>
<protein>
    <recommendedName>
        <fullName evidence="1">Large ribosomal subunit protein uL30</fullName>
    </recommendedName>
    <alternativeName>
        <fullName evidence="2">50S ribosomal protein L30</fullName>
    </alternativeName>
</protein>
<keyword id="KW-0687">Ribonucleoprotein</keyword>
<keyword id="KW-0689">Ribosomal protein</keyword>